<protein>
    <recommendedName>
        <fullName evidence="1">Translation initiation factor IF-1</fullName>
    </recommendedName>
</protein>
<gene>
    <name evidence="1" type="primary">infA</name>
    <name type="ordered locus">LBUL_0372</name>
</gene>
<proteinExistence type="inferred from homology"/>
<feature type="chain" id="PRO_0000338845" description="Translation initiation factor IF-1">
    <location>
        <begin position="1"/>
        <end position="73"/>
    </location>
</feature>
<feature type="domain" description="S1-like" evidence="1">
    <location>
        <begin position="1"/>
        <end position="72"/>
    </location>
</feature>
<dbReference type="EMBL" id="CP000412">
    <property type="protein sequence ID" value="ABJ58029.1"/>
    <property type="molecule type" value="Genomic_DNA"/>
</dbReference>
<dbReference type="RefSeq" id="WP_002878178.1">
    <property type="nucleotide sequence ID" value="NC_008529.1"/>
</dbReference>
<dbReference type="SMR" id="Q04BZ3"/>
<dbReference type="GeneID" id="93290579"/>
<dbReference type="KEGG" id="lbu:LBUL_0372"/>
<dbReference type="HOGENOM" id="CLU_151267_1_0_9"/>
<dbReference type="BioCyc" id="LDEL321956:LBUL_RS01740-MONOMER"/>
<dbReference type="GO" id="GO:0005829">
    <property type="term" value="C:cytosol"/>
    <property type="evidence" value="ECO:0007669"/>
    <property type="project" value="TreeGrafter"/>
</dbReference>
<dbReference type="GO" id="GO:0043022">
    <property type="term" value="F:ribosome binding"/>
    <property type="evidence" value="ECO:0007669"/>
    <property type="project" value="UniProtKB-UniRule"/>
</dbReference>
<dbReference type="GO" id="GO:0019843">
    <property type="term" value="F:rRNA binding"/>
    <property type="evidence" value="ECO:0007669"/>
    <property type="project" value="UniProtKB-UniRule"/>
</dbReference>
<dbReference type="GO" id="GO:0003743">
    <property type="term" value="F:translation initiation factor activity"/>
    <property type="evidence" value="ECO:0007669"/>
    <property type="project" value="UniProtKB-UniRule"/>
</dbReference>
<dbReference type="CDD" id="cd04451">
    <property type="entry name" value="S1_IF1"/>
    <property type="match status" value="1"/>
</dbReference>
<dbReference type="FunFam" id="2.40.50.140:FF:000002">
    <property type="entry name" value="Translation initiation factor IF-1"/>
    <property type="match status" value="1"/>
</dbReference>
<dbReference type="Gene3D" id="2.40.50.140">
    <property type="entry name" value="Nucleic acid-binding proteins"/>
    <property type="match status" value="1"/>
</dbReference>
<dbReference type="HAMAP" id="MF_00075">
    <property type="entry name" value="IF_1"/>
    <property type="match status" value="1"/>
</dbReference>
<dbReference type="InterPro" id="IPR012340">
    <property type="entry name" value="NA-bd_OB-fold"/>
</dbReference>
<dbReference type="InterPro" id="IPR006196">
    <property type="entry name" value="RNA-binding_domain_S1_IF1"/>
</dbReference>
<dbReference type="InterPro" id="IPR003029">
    <property type="entry name" value="S1_domain"/>
</dbReference>
<dbReference type="InterPro" id="IPR004368">
    <property type="entry name" value="TIF_IF1"/>
</dbReference>
<dbReference type="NCBIfam" id="TIGR00008">
    <property type="entry name" value="infA"/>
    <property type="match status" value="1"/>
</dbReference>
<dbReference type="PANTHER" id="PTHR33370">
    <property type="entry name" value="TRANSLATION INITIATION FACTOR IF-1, CHLOROPLASTIC"/>
    <property type="match status" value="1"/>
</dbReference>
<dbReference type="PANTHER" id="PTHR33370:SF1">
    <property type="entry name" value="TRANSLATION INITIATION FACTOR IF-1, CHLOROPLASTIC"/>
    <property type="match status" value="1"/>
</dbReference>
<dbReference type="Pfam" id="PF01176">
    <property type="entry name" value="eIF-1a"/>
    <property type="match status" value="1"/>
</dbReference>
<dbReference type="SMART" id="SM00316">
    <property type="entry name" value="S1"/>
    <property type="match status" value="1"/>
</dbReference>
<dbReference type="SUPFAM" id="SSF50249">
    <property type="entry name" value="Nucleic acid-binding proteins"/>
    <property type="match status" value="1"/>
</dbReference>
<dbReference type="PROSITE" id="PS50832">
    <property type="entry name" value="S1_IF1_TYPE"/>
    <property type="match status" value="1"/>
</dbReference>
<keyword id="KW-0963">Cytoplasm</keyword>
<keyword id="KW-0396">Initiation factor</keyword>
<keyword id="KW-0648">Protein biosynthesis</keyword>
<keyword id="KW-0694">RNA-binding</keyword>
<keyword id="KW-0699">rRNA-binding</keyword>
<sequence>MAKDDVIEVEGKVVDTLPNAMFKVELENGATILAHVSGKIRMHYIRILPGDRVTVELSPYDLTKGRITYRFIK</sequence>
<organism>
    <name type="scientific">Lactobacillus delbrueckii subsp. bulgaricus (strain ATCC BAA-365 / Lb-18)</name>
    <dbReference type="NCBI Taxonomy" id="321956"/>
    <lineage>
        <taxon>Bacteria</taxon>
        <taxon>Bacillati</taxon>
        <taxon>Bacillota</taxon>
        <taxon>Bacilli</taxon>
        <taxon>Lactobacillales</taxon>
        <taxon>Lactobacillaceae</taxon>
        <taxon>Lactobacillus</taxon>
    </lineage>
</organism>
<reference key="1">
    <citation type="journal article" date="2006" name="Proc. Natl. Acad. Sci. U.S.A.">
        <title>Comparative genomics of the lactic acid bacteria.</title>
        <authorList>
            <person name="Makarova K.S."/>
            <person name="Slesarev A."/>
            <person name="Wolf Y.I."/>
            <person name="Sorokin A."/>
            <person name="Mirkin B."/>
            <person name="Koonin E.V."/>
            <person name="Pavlov A."/>
            <person name="Pavlova N."/>
            <person name="Karamychev V."/>
            <person name="Polouchine N."/>
            <person name="Shakhova V."/>
            <person name="Grigoriev I."/>
            <person name="Lou Y."/>
            <person name="Rohksar D."/>
            <person name="Lucas S."/>
            <person name="Huang K."/>
            <person name="Goodstein D.M."/>
            <person name="Hawkins T."/>
            <person name="Plengvidhya V."/>
            <person name="Welker D."/>
            <person name="Hughes J."/>
            <person name="Goh Y."/>
            <person name="Benson A."/>
            <person name="Baldwin K."/>
            <person name="Lee J.-H."/>
            <person name="Diaz-Muniz I."/>
            <person name="Dosti B."/>
            <person name="Smeianov V."/>
            <person name="Wechter W."/>
            <person name="Barabote R."/>
            <person name="Lorca G."/>
            <person name="Altermann E."/>
            <person name="Barrangou R."/>
            <person name="Ganesan B."/>
            <person name="Xie Y."/>
            <person name="Rawsthorne H."/>
            <person name="Tamir D."/>
            <person name="Parker C."/>
            <person name="Breidt F."/>
            <person name="Broadbent J.R."/>
            <person name="Hutkins R."/>
            <person name="O'Sullivan D."/>
            <person name="Steele J."/>
            <person name="Unlu G."/>
            <person name="Saier M.H. Jr."/>
            <person name="Klaenhammer T."/>
            <person name="Richardson P."/>
            <person name="Kozyavkin S."/>
            <person name="Weimer B.C."/>
            <person name="Mills D.A."/>
        </authorList>
    </citation>
    <scope>NUCLEOTIDE SEQUENCE [LARGE SCALE GENOMIC DNA]</scope>
    <source>
        <strain>ATCC BAA-365 / Lb-18</strain>
    </source>
</reference>
<comment type="function">
    <text evidence="1">One of the essential components for the initiation of protein synthesis. Stabilizes the binding of IF-2 and IF-3 on the 30S subunit to which N-formylmethionyl-tRNA(fMet) subsequently binds. Helps modulate mRNA selection, yielding the 30S pre-initiation complex (PIC). Upon addition of the 50S ribosomal subunit IF-1, IF-2 and IF-3 are released leaving the mature 70S translation initiation complex.</text>
</comment>
<comment type="subunit">
    <text evidence="1">Component of the 30S ribosomal translation pre-initiation complex which assembles on the 30S ribosome in the order IF-2 and IF-3, IF-1 and N-formylmethionyl-tRNA(fMet); mRNA recruitment can occur at any time during PIC assembly.</text>
</comment>
<comment type="subcellular location">
    <subcellularLocation>
        <location evidence="1">Cytoplasm</location>
    </subcellularLocation>
</comment>
<comment type="similarity">
    <text evidence="1">Belongs to the IF-1 family.</text>
</comment>
<evidence type="ECO:0000255" key="1">
    <source>
        <dbReference type="HAMAP-Rule" id="MF_00075"/>
    </source>
</evidence>
<name>IF1_LACDB</name>
<accession>Q04BZ3</accession>